<evidence type="ECO:0000250" key="1">
    <source>
        <dbReference type="UniProtKB" id="P03923"/>
    </source>
</evidence>
<evidence type="ECO:0000250" key="2">
    <source>
        <dbReference type="UniProtKB" id="P03924"/>
    </source>
</evidence>
<evidence type="ECO:0000255" key="3"/>
<evidence type="ECO:0000305" key="4"/>
<evidence type="ECO:0000312" key="5">
    <source>
        <dbReference type="Proteomes" id="UP000000437"/>
    </source>
</evidence>
<sequence>MAFYLSFLMAALVGGMIAIASNPAPYFAAFGLVVVAGVGCGILVSYGGSFLSLILFLIYLGGMLVVFAYSAALAAEPFPEAWGDRVVFWRVMVYGLVVIVAAGFLLTGDTGLLMSVDAFKEFSVIRADVSGVAMMYSSGGKMLVICAWVLLLTLFVVLEVTRGLSYGVLRAI</sequence>
<geneLocation type="mitochondrion"/>
<reference key="1">
    <citation type="journal article" date="2001" name="Genome Res.">
        <title>The complete sequence of the zebrafish (Danio rerio) mitochondrial genome and evolutionary patterns in vertebrate mitochondrial DNA.</title>
        <authorList>
            <person name="Broughton R.E."/>
            <person name="Milam J.E."/>
            <person name="Roe B.A."/>
        </authorList>
    </citation>
    <scope>NUCLEOTIDE SEQUENCE [LARGE SCALE GENOMIC DNA]</scope>
    <source>
        <strain evidence="5">Tuebingen</strain>
    </source>
</reference>
<organism>
    <name type="scientific">Danio rerio</name>
    <name type="common">Zebrafish</name>
    <name type="synonym">Brachydanio rerio</name>
    <dbReference type="NCBI Taxonomy" id="7955"/>
    <lineage>
        <taxon>Eukaryota</taxon>
        <taxon>Metazoa</taxon>
        <taxon>Chordata</taxon>
        <taxon>Craniata</taxon>
        <taxon>Vertebrata</taxon>
        <taxon>Euteleostomi</taxon>
        <taxon>Actinopterygii</taxon>
        <taxon>Neopterygii</taxon>
        <taxon>Teleostei</taxon>
        <taxon>Ostariophysi</taxon>
        <taxon>Cypriniformes</taxon>
        <taxon>Danionidae</taxon>
        <taxon>Danioninae</taxon>
        <taxon>Danio</taxon>
    </lineage>
</organism>
<name>NU6M_DANRE</name>
<comment type="function">
    <text evidence="1">Core subunit of the mitochondrial membrane respiratory chain NADH dehydrogenase (Complex I) which catalyzes electron transfer from NADH through the respiratory chain, using ubiquinone as an electron acceptor. Essential for the catalytic activity and assembly of complex I.</text>
</comment>
<comment type="catalytic activity">
    <reaction evidence="1">
        <text>a ubiquinone + NADH + 5 H(+)(in) = a ubiquinol + NAD(+) + 4 H(+)(out)</text>
        <dbReference type="Rhea" id="RHEA:29091"/>
        <dbReference type="Rhea" id="RHEA-COMP:9565"/>
        <dbReference type="Rhea" id="RHEA-COMP:9566"/>
        <dbReference type="ChEBI" id="CHEBI:15378"/>
        <dbReference type="ChEBI" id="CHEBI:16389"/>
        <dbReference type="ChEBI" id="CHEBI:17976"/>
        <dbReference type="ChEBI" id="CHEBI:57540"/>
        <dbReference type="ChEBI" id="CHEBI:57945"/>
        <dbReference type="EC" id="7.1.1.2"/>
    </reaction>
</comment>
<comment type="subunit">
    <text evidence="2">Core subunit of respiratory chain NADH dehydrogenase (Complex I) which is composed of 45 different subunits.</text>
</comment>
<comment type="subcellular location">
    <subcellularLocation>
        <location evidence="2">Mitochondrion inner membrane</location>
        <topology evidence="3">Multi-pass membrane protein</topology>
    </subcellularLocation>
</comment>
<comment type="similarity">
    <text evidence="4">Belongs to the complex I subunit 6 family.</text>
</comment>
<accession>Q9MIX9</accession>
<keyword id="KW-0249">Electron transport</keyword>
<keyword id="KW-0472">Membrane</keyword>
<keyword id="KW-0496">Mitochondrion</keyword>
<keyword id="KW-0999">Mitochondrion inner membrane</keyword>
<keyword id="KW-0520">NAD</keyword>
<keyword id="KW-1185">Reference proteome</keyword>
<keyword id="KW-0679">Respiratory chain</keyword>
<keyword id="KW-1278">Translocase</keyword>
<keyword id="KW-0812">Transmembrane</keyword>
<keyword id="KW-1133">Transmembrane helix</keyword>
<keyword id="KW-0813">Transport</keyword>
<keyword id="KW-0830">Ubiquinone</keyword>
<feature type="chain" id="PRO_0000118255" description="NADH-ubiquinone oxidoreductase chain 6">
    <location>
        <begin position="1"/>
        <end position="172"/>
    </location>
</feature>
<feature type="transmembrane region" description="Helical" evidence="3">
    <location>
        <begin position="1"/>
        <end position="21"/>
    </location>
</feature>
<feature type="transmembrane region" description="Helical" evidence="3">
    <location>
        <begin position="24"/>
        <end position="44"/>
    </location>
</feature>
<feature type="transmembrane region" description="Helical" evidence="3">
    <location>
        <begin position="53"/>
        <end position="73"/>
    </location>
</feature>
<feature type="transmembrane region" description="Helical" evidence="3">
    <location>
        <begin position="86"/>
        <end position="106"/>
    </location>
</feature>
<feature type="transmembrane region" description="Helical" evidence="3">
    <location>
        <begin position="140"/>
        <end position="160"/>
    </location>
</feature>
<proteinExistence type="inferred from homology"/>
<dbReference type="EC" id="7.1.1.2" evidence="1"/>
<dbReference type="EMBL" id="AC024175">
    <property type="protein sequence ID" value="AAF74308.1"/>
    <property type="molecule type" value="Genomic_DNA"/>
</dbReference>
<dbReference type="RefSeq" id="NP_059342.1">
    <property type="nucleotide sequence ID" value="NC_002333.2"/>
</dbReference>
<dbReference type="SMR" id="Q9MIX9"/>
<dbReference type="FunCoup" id="Q9MIX9">
    <property type="interactions" value="39"/>
</dbReference>
<dbReference type="STRING" id="7955.ENSDARP00000087880"/>
<dbReference type="PaxDb" id="7955-ENSDARP00000087880"/>
<dbReference type="Ensembl" id="ENSDART00000093623">
    <property type="protein sequence ID" value="ENSDARP00000087880"/>
    <property type="gene ID" value="ENSDARG00000063922"/>
</dbReference>
<dbReference type="GeneID" id="140536"/>
<dbReference type="KEGG" id="dre:140536"/>
<dbReference type="AGR" id="ZFIN:ZDB-GENE-011205-13"/>
<dbReference type="CTD" id="4541"/>
<dbReference type="eggNOG" id="ENOG502S2Q2">
    <property type="taxonomic scope" value="Eukaryota"/>
</dbReference>
<dbReference type="HOGENOM" id="CLU_129718_0_0_1"/>
<dbReference type="InParanoid" id="Q9MIX9"/>
<dbReference type="OMA" id="WVIYDTG"/>
<dbReference type="OrthoDB" id="9837654at2759"/>
<dbReference type="PhylomeDB" id="Q9MIX9"/>
<dbReference type="TreeFam" id="TF343324"/>
<dbReference type="Reactome" id="R-DRE-611105">
    <property type="pathway name" value="Respiratory electron transport"/>
</dbReference>
<dbReference type="PRO" id="PR:Q9MIX9"/>
<dbReference type="Proteomes" id="UP000000437">
    <property type="component" value="Mitochondrion MT"/>
</dbReference>
<dbReference type="Bgee" id="ENSDARG00000063922">
    <property type="expression patterns" value="Expressed in brain and 22 other cell types or tissues"/>
</dbReference>
<dbReference type="ExpressionAtlas" id="Q9MIX9">
    <property type="expression patterns" value="baseline"/>
</dbReference>
<dbReference type="GO" id="GO:0005743">
    <property type="term" value="C:mitochondrial inner membrane"/>
    <property type="evidence" value="ECO:0000250"/>
    <property type="project" value="UniProtKB"/>
</dbReference>
<dbReference type="GO" id="GO:0005739">
    <property type="term" value="C:mitochondrion"/>
    <property type="evidence" value="ECO:0000318"/>
    <property type="project" value="GO_Central"/>
</dbReference>
<dbReference type="GO" id="GO:0008137">
    <property type="term" value="F:NADH dehydrogenase (ubiquinone) activity"/>
    <property type="evidence" value="ECO:0000250"/>
    <property type="project" value="UniProtKB"/>
</dbReference>
<dbReference type="GO" id="GO:0006120">
    <property type="term" value="P:mitochondrial electron transport, NADH to ubiquinone"/>
    <property type="evidence" value="ECO:0000250"/>
    <property type="project" value="UniProtKB"/>
</dbReference>
<dbReference type="GO" id="GO:0032981">
    <property type="term" value="P:mitochondrial respiratory chain complex I assembly"/>
    <property type="evidence" value="ECO:0000250"/>
    <property type="project" value="UniProtKB"/>
</dbReference>
<dbReference type="InterPro" id="IPR050269">
    <property type="entry name" value="ComplexI_Subunit6"/>
</dbReference>
<dbReference type="InterPro" id="IPR001457">
    <property type="entry name" value="NADH_UbQ/plastoQ_OxRdtase_su6"/>
</dbReference>
<dbReference type="PANTHER" id="PTHR11435">
    <property type="entry name" value="NADH UBIQUINONE OXIDOREDUCTASE SUBUNIT ND6"/>
    <property type="match status" value="1"/>
</dbReference>
<dbReference type="PANTHER" id="PTHR11435:SF1">
    <property type="entry name" value="NADH-UBIQUINONE OXIDOREDUCTASE CHAIN 6"/>
    <property type="match status" value="1"/>
</dbReference>
<dbReference type="Pfam" id="PF00499">
    <property type="entry name" value="Oxidored_q3"/>
    <property type="match status" value="1"/>
</dbReference>
<gene>
    <name type="primary">mt-nd6</name>
    <name type="synonym">mtnd6</name>
    <name type="synonym">nd6</name>
</gene>
<protein>
    <recommendedName>
        <fullName>NADH-ubiquinone oxidoreductase chain 6</fullName>
        <ecNumber evidence="1">7.1.1.2</ecNumber>
    </recommendedName>
    <alternativeName>
        <fullName>NADH dehydrogenase subunit 6</fullName>
    </alternativeName>
</protein>